<proteinExistence type="inferred from homology"/>
<evidence type="ECO:0000255" key="1">
    <source>
        <dbReference type="HAMAP-Rule" id="MF_00122"/>
    </source>
</evidence>
<keyword id="KW-0067">ATP-binding</keyword>
<keyword id="KW-0436">Ligase</keyword>
<keyword id="KW-0547">Nucleotide-binding</keyword>
<keyword id="KW-0648">Protein biosynthesis</keyword>
<keyword id="KW-1185">Reference proteome</keyword>
<sequence>MAISRSEVEHVAKLARLKFSQEEIEEFTVQLSKIIDYVNKLNELDTENVEPTAHIVPIHNVFREDEVKPSMDRDKILMNAPYKENGCFKVPKIIE</sequence>
<organism>
    <name type="scientific">Thermoanaerobacter pseudethanolicus (strain ATCC 33223 / 39E)</name>
    <name type="common">Clostridium thermohydrosulfuricum</name>
    <dbReference type="NCBI Taxonomy" id="340099"/>
    <lineage>
        <taxon>Bacteria</taxon>
        <taxon>Bacillati</taxon>
        <taxon>Bacillota</taxon>
        <taxon>Clostridia</taxon>
        <taxon>Thermoanaerobacterales</taxon>
        <taxon>Thermoanaerobacteraceae</taxon>
        <taxon>Thermoanaerobacter</taxon>
    </lineage>
</organism>
<dbReference type="EC" id="6.3.5.-" evidence="1"/>
<dbReference type="EMBL" id="CP000924">
    <property type="protein sequence ID" value="ABY95330.1"/>
    <property type="molecule type" value="Genomic_DNA"/>
</dbReference>
<dbReference type="RefSeq" id="WP_003868770.1">
    <property type="nucleotide sequence ID" value="NC_010321.1"/>
</dbReference>
<dbReference type="SMR" id="B0KBN5"/>
<dbReference type="STRING" id="340099.Teth39_1693"/>
<dbReference type="KEGG" id="tpd:Teth39_1693"/>
<dbReference type="eggNOG" id="COG0721">
    <property type="taxonomic scope" value="Bacteria"/>
</dbReference>
<dbReference type="HOGENOM" id="CLU_105899_1_2_9"/>
<dbReference type="Proteomes" id="UP000002156">
    <property type="component" value="Chromosome"/>
</dbReference>
<dbReference type="GO" id="GO:0050566">
    <property type="term" value="F:asparaginyl-tRNA synthase (glutamine-hydrolyzing) activity"/>
    <property type="evidence" value="ECO:0007669"/>
    <property type="project" value="RHEA"/>
</dbReference>
<dbReference type="GO" id="GO:0005524">
    <property type="term" value="F:ATP binding"/>
    <property type="evidence" value="ECO:0007669"/>
    <property type="project" value="UniProtKB-KW"/>
</dbReference>
<dbReference type="GO" id="GO:0050567">
    <property type="term" value="F:glutaminyl-tRNA synthase (glutamine-hydrolyzing) activity"/>
    <property type="evidence" value="ECO:0007669"/>
    <property type="project" value="UniProtKB-UniRule"/>
</dbReference>
<dbReference type="GO" id="GO:0070681">
    <property type="term" value="P:glutaminyl-tRNAGln biosynthesis via transamidation"/>
    <property type="evidence" value="ECO:0007669"/>
    <property type="project" value="TreeGrafter"/>
</dbReference>
<dbReference type="GO" id="GO:0006450">
    <property type="term" value="P:regulation of translational fidelity"/>
    <property type="evidence" value="ECO:0007669"/>
    <property type="project" value="InterPro"/>
</dbReference>
<dbReference type="GO" id="GO:0006412">
    <property type="term" value="P:translation"/>
    <property type="evidence" value="ECO:0007669"/>
    <property type="project" value="UniProtKB-UniRule"/>
</dbReference>
<dbReference type="Gene3D" id="1.10.20.60">
    <property type="entry name" value="Glu-tRNAGln amidotransferase C subunit, N-terminal domain"/>
    <property type="match status" value="1"/>
</dbReference>
<dbReference type="HAMAP" id="MF_00122">
    <property type="entry name" value="GatC"/>
    <property type="match status" value="1"/>
</dbReference>
<dbReference type="InterPro" id="IPR036113">
    <property type="entry name" value="Asp/Glu-ADT_sf_sub_c"/>
</dbReference>
<dbReference type="InterPro" id="IPR003837">
    <property type="entry name" value="GatC"/>
</dbReference>
<dbReference type="NCBIfam" id="TIGR00135">
    <property type="entry name" value="gatC"/>
    <property type="match status" value="1"/>
</dbReference>
<dbReference type="PANTHER" id="PTHR15004">
    <property type="entry name" value="GLUTAMYL-TRNA(GLN) AMIDOTRANSFERASE SUBUNIT C, MITOCHONDRIAL"/>
    <property type="match status" value="1"/>
</dbReference>
<dbReference type="PANTHER" id="PTHR15004:SF0">
    <property type="entry name" value="GLUTAMYL-TRNA(GLN) AMIDOTRANSFERASE SUBUNIT C, MITOCHONDRIAL"/>
    <property type="match status" value="1"/>
</dbReference>
<dbReference type="Pfam" id="PF02686">
    <property type="entry name" value="GatC"/>
    <property type="match status" value="1"/>
</dbReference>
<dbReference type="SUPFAM" id="SSF141000">
    <property type="entry name" value="Glu-tRNAGln amidotransferase C subunit"/>
    <property type="match status" value="1"/>
</dbReference>
<reference key="1">
    <citation type="submission" date="2008-01" db="EMBL/GenBank/DDBJ databases">
        <title>Complete sequence of Thermoanaerobacter pseudethanolicus 39E.</title>
        <authorList>
            <person name="Copeland A."/>
            <person name="Lucas S."/>
            <person name="Lapidus A."/>
            <person name="Barry K."/>
            <person name="Glavina del Rio T."/>
            <person name="Dalin E."/>
            <person name="Tice H."/>
            <person name="Pitluck S."/>
            <person name="Bruce D."/>
            <person name="Goodwin L."/>
            <person name="Saunders E."/>
            <person name="Brettin T."/>
            <person name="Detter J.C."/>
            <person name="Han C."/>
            <person name="Schmutz J."/>
            <person name="Larimer F."/>
            <person name="Land M."/>
            <person name="Hauser L."/>
            <person name="Kyrpides N."/>
            <person name="Lykidis A."/>
            <person name="Hemme C."/>
            <person name="Fields M.W."/>
            <person name="He Z."/>
            <person name="Zhou J."/>
            <person name="Richardson P."/>
        </authorList>
    </citation>
    <scope>NUCLEOTIDE SEQUENCE [LARGE SCALE GENOMIC DNA]</scope>
    <source>
        <strain>ATCC 33223 / DSM 2355 / 39E</strain>
    </source>
</reference>
<gene>
    <name evidence="1" type="primary">gatC</name>
    <name type="ordered locus">Teth39_1693</name>
</gene>
<comment type="function">
    <text evidence="1">Allows the formation of correctly charged Asn-tRNA(Asn) or Gln-tRNA(Gln) through the transamidation of misacylated Asp-tRNA(Asn) or Glu-tRNA(Gln) in organisms which lack either or both of asparaginyl-tRNA or glutaminyl-tRNA synthetases. The reaction takes place in the presence of glutamine and ATP through an activated phospho-Asp-tRNA(Asn) or phospho-Glu-tRNA(Gln).</text>
</comment>
<comment type="catalytic activity">
    <reaction evidence="1">
        <text>L-glutamyl-tRNA(Gln) + L-glutamine + ATP + H2O = L-glutaminyl-tRNA(Gln) + L-glutamate + ADP + phosphate + H(+)</text>
        <dbReference type="Rhea" id="RHEA:17521"/>
        <dbReference type="Rhea" id="RHEA-COMP:9681"/>
        <dbReference type="Rhea" id="RHEA-COMP:9684"/>
        <dbReference type="ChEBI" id="CHEBI:15377"/>
        <dbReference type="ChEBI" id="CHEBI:15378"/>
        <dbReference type="ChEBI" id="CHEBI:29985"/>
        <dbReference type="ChEBI" id="CHEBI:30616"/>
        <dbReference type="ChEBI" id="CHEBI:43474"/>
        <dbReference type="ChEBI" id="CHEBI:58359"/>
        <dbReference type="ChEBI" id="CHEBI:78520"/>
        <dbReference type="ChEBI" id="CHEBI:78521"/>
        <dbReference type="ChEBI" id="CHEBI:456216"/>
    </reaction>
</comment>
<comment type="catalytic activity">
    <reaction evidence="1">
        <text>L-aspartyl-tRNA(Asn) + L-glutamine + ATP + H2O = L-asparaginyl-tRNA(Asn) + L-glutamate + ADP + phosphate + 2 H(+)</text>
        <dbReference type="Rhea" id="RHEA:14513"/>
        <dbReference type="Rhea" id="RHEA-COMP:9674"/>
        <dbReference type="Rhea" id="RHEA-COMP:9677"/>
        <dbReference type="ChEBI" id="CHEBI:15377"/>
        <dbReference type="ChEBI" id="CHEBI:15378"/>
        <dbReference type="ChEBI" id="CHEBI:29985"/>
        <dbReference type="ChEBI" id="CHEBI:30616"/>
        <dbReference type="ChEBI" id="CHEBI:43474"/>
        <dbReference type="ChEBI" id="CHEBI:58359"/>
        <dbReference type="ChEBI" id="CHEBI:78515"/>
        <dbReference type="ChEBI" id="CHEBI:78516"/>
        <dbReference type="ChEBI" id="CHEBI:456216"/>
    </reaction>
</comment>
<comment type="subunit">
    <text evidence="1">Heterotrimer of A, B and C subunits.</text>
</comment>
<comment type="similarity">
    <text evidence="1">Belongs to the GatC family.</text>
</comment>
<protein>
    <recommendedName>
        <fullName evidence="1">Aspartyl/glutamyl-tRNA(Asn/Gln) amidotransferase subunit C</fullName>
        <shortName evidence="1">Asp/Glu-ADT subunit C</shortName>
        <ecNumber evidence="1">6.3.5.-</ecNumber>
    </recommendedName>
</protein>
<name>GATC_THEP3</name>
<feature type="chain" id="PRO_1000095321" description="Aspartyl/glutamyl-tRNA(Asn/Gln) amidotransferase subunit C">
    <location>
        <begin position="1"/>
        <end position="95"/>
    </location>
</feature>
<accession>B0KBN5</accession>